<accession>A0A193PS74</accession>
<comment type="function">
    <text evidence="7">Non-reducing polyketide synthase; part of the cluster that mediates the biosynthesis of LL-Z1272-beta, also known as ilicicolin B, a prenylated aryl-aldehyde produced by several fungi and that serves as a key pathway intermediate for many fungal meroterpenoids (PubMed:26972702). The first step in the pathway is performed by the non-reducing polyketide synthase stbA that produces orsellinic acid by condensing acetyl-CoA with 3 malonyl-CoA units (PubMed:26972702). The prenyltransferase stbC then prenylates orsenilic acid into grifolic acid (PubMed:26972702). Finally, grifolic acid is reduced to ilicicolin B by the NRPS-like protein stbB (PubMed:26972702).</text>
</comment>
<comment type="catalytic activity">
    <reaction evidence="7">
        <text>3 malonyl-CoA + acetyl-CoA + 2 H(+) = orsellinate + 3 CO2 + 4 CoA</text>
        <dbReference type="Rhea" id="RHEA:62972"/>
        <dbReference type="ChEBI" id="CHEBI:15378"/>
        <dbReference type="ChEBI" id="CHEBI:16162"/>
        <dbReference type="ChEBI" id="CHEBI:16526"/>
        <dbReference type="ChEBI" id="CHEBI:57287"/>
        <dbReference type="ChEBI" id="CHEBI:57288"/>
        <dbReference type="ChEBI" id="CHEBI:57384"/>
    </reaction>
    <physiologicalReaction direction="left-to-right" evidence="7">
        <dbReference type="Rhea" id="RHEA:62973"/>
    </physiologicalReaction>
</comment>
<comment type="pathway">
    <text evidence="7">Secondary metabolite biosynthesis; terpenoid biosynthesis.</text>
</comment>
<comment type="domain">
    <text evidence="9">Multidomain protein; including a starter unit:ACP transacylase (SAT) that selects the starter unit; a ketosynthase (KS) that catalyzes repeated decarboxylative condensation to elongate the polyketide backbone; a malonyl-CoA:ACP transacylase (MAT) that selects and transfers the extender unit malonyl-CoA; a product template (PT) domain that controls the immediate cyclization regioselectivity of the reactive polyketide backbone; and an acyl-carrier protein (ACP) that serves as the tether of the growing and completed polyketide via its phosphopantetheinyl arm.</text>
</comment>
<comment type="domain">
    <text evidence="1">The release of the polyketide chain from the non-reducing polyketide synthase is mediated by the thioesterase (TE) domain localized at the C-ter of the protein.</text>
</comment>
<proteinExistence type="evidence at protein level"/>
<feature type="chain" id="PRO_0000450379" description="Non-reducing polyketide synthase stbA">
    <location>
        <begin position="1"/>
        <end position="2220"/>
    </location>
</feature>
<feature type="domain" description="Ketosynthase family 3 (KS3)" evidence="4">
    <location>
        <begin position="379"/>
        <end position="803"/>
    </location>
</feature>
<feature type="domain" description="PKS/mFAS DH" evidence="5">
    <location>
        <begin position="1287"/>
        <end position="1589"/>
    </location>
</feature>
<feature type="domain" description="Carrier 1" evidence="3">
    <location>
        <begin position="1634"/>
        <end position="1711"/>
    </location>
</feature>
<feature type="domain" description="Carrier 2" evidence="3">
    <location>
        <begin position="1742"/>
        <end position="1821"/>
    </location>
</feature>
<feature type="region of interest" description="N-terminal acylcarrier protein transacylase domain (SAT)" evidence="2">
    <location>
        <begin position="10"/>
        <end position="255"/>
    </location>
</feature>
<feature type="region of interest" description="Malonyl-CoA:ACP transacylase (MAT) domain" evidence="2">
    <location>
        <begin position="906"/>
        <end position="1207"/>
    </location>
</feature>
<feature type="region of interest" description="N-terminal hotdog fold" evidence="5">
    <location>
        <begin position="1287"/>
        <end position="1414"/>
    </location>
</feature>
<feature type="region of interest" description="Product template (PT) domain" evidence="2">
    <location>
        <begin position="1292"/>
        <end position="1588"/>
    </location>
</feature>
<feature type="region of interest" description="C-terminal hotdog fold" evidence="5">
    <location>
        <begin position="1436"/>
        <end position="1589"/>
    </location>
</feature>
<feature type="region of interest" description="Thioesterase (TE) domain" evidence="1">
    <location>
        <begin position="1879"/>
        <end position="2210"/>
    </location>
</feature>
<feature type="active site" description="For beta-ketoacyl synthase activity" evidence="4">
    <location>
        <position position="551"/>
    </location>
</feature>
<feature type="active site" description="For beta-ketoacyl synthase activity" evidence="4">
    <location>
        <position position="687"/>
    </location>
</feature>
<feature type="active site" description="For beta-ketoacyl synthase activity" evidence="4">
    <location>
        <position position="726"/>
    </location>
</feature>
<feature type="active site" description="For acyl/malonyl transferase activity" evidence="6">
    <location>
        <position position="993"/>
    </location>
</feature>
<feature type="active site" description="Proton acceptor; for dehydratase activity" evidence="5">
    <location>
        <position position="1323"/>
    </location>
</feature>
<feature type="active site" description="Proton donor; for dehydratase activity" evidence="5">
    <location>
        <position position="1500"/>
    </location>
</feature>
<feature type="active site" description="For thioesterase activity" evidence="1">
    <location>
        <position position="1999"/>
    </location>
</feature>
<feature type="active site" description="For thioesterase activity" evidence="1">
    <location>
        <position position="2148"/>
    </location>
</feature>
<feature type="modified residue" description="O-(pantetheine 4'-phosphoryl)serine" evidence="3">
    <location>
        <position position="1671"/>
    </location>
</feature>
<feature type="modified residue" description="O-(pantetheine 4'-phosphoryl)serine" evidence="3">
    <location>
        <position position="1779"/>
    </location>
</feature>
<keyword id="KW-0511">Multifunctional enzyme</keyword>
<keyword id="KW-0596">Phosphopantetheine</keyword>
<keyword id="KW-0597">Phosphoprotein</keyword>
<keyword id="KW-0808">Transferase</keyword>
<sequence length="2220" mass="237834">MARPTTSAAIFSPQNSPPKRSYLAYIRSKLVDDRTLAPLLQAILSLPETWRSLVAARADMADMIEAPRLVQSFVDWINTGSTDILESELAAIVTLPLLTIIHMVQYYEYLQGAGCSHIELLESFDGGVQGHCIGLLSAIVVASAGSEEDLIARAVAGLRLSLAIGAFGDLGEYSTNLRSSTLVFRLKDMSAADEIVHRFPGTYISTVTDSRTVSMVVPGSQVTDLMAYADKNGLQPRSVHIRSRLHDATNTDMAQACREFCDSLEGLPFGAGETLLTSVRSNRTGDCLSDIPESLSTEVIDTILLSMCNWTKVMRNLVTDLKESSKSQHTLALFGIGDSVPLELFRQNDVDITKFQAVSLAPTAPSPENGLRPTDFFPSDAIAVVGAGFRLPGASTFEELWEMISEGKTRLEPFRTDRSDLKGSYRAGQDKEWTKKRNFFGNYVEDIDSFDHSFFGISPREAKYMDPQQRLLLLTAWEAMDSAGMLRYHRRERGDNVGCFVGASFNEYVENTSGYSASAFTATGTIRAFLSGKVSYHFGWTGPSEVIDTACSASIVAVHRACQAIKSGECPVAVAGGVNLITGITNYFDLAKASFLSPTGQCKPFDDSGDGYCRADGVGLVVLKSLSQAVADGDHIMGVIPSIATNQGGIGAPGITVPDGIMQRALYKKVLAKSGMRAEDITYVEAHGTGTPVGDPIEIRSIREVFGGAKRPSPLYLGSLKANVGHSETAAGVASLLKVLTMFREQGIPPIANFKRLNHNIPALETDRMAIPTSQMPWNARQRIACINSYGASGSNSALICSEWPDNNIRDAKDRISAHTPAYPILLSANSKESLQRYAKDLATYLTKTNADKNLGDLAFTLSERRKHHRYRWSTTAADMASVVDQLQSPLEGVIDSTKTGKKVVLAFSGQSRTNIGVDPSVIQAYPRFMEHMKQCSSILQSLGCPDILPYLSQTDPISDPVILQCGTVSVQISTAKCWMDGGVQVDGIVGHSLGELASLAISGVLSLKDTLTAVYTRAQLINLKWGSERGTMMAIHAKVDVIQSVIAKVKAEVSSEDDEVEIACYNSVGSHVIVGKDSSIAIAEKVLQGDAKYQGLRYQRVGTSHGFHSRFTKPLLLDLVRFEKTLEFKKPIIPLETCTQVPFNFESNDSTYLAHHARDPVYFYDAVQRLEKRLGACAFLEAGWGTPVVSMAKKAVADATQHTFQAVTSPATATANLWREGCSITFWSFLTPKQSMLKPIWTPPYSFDNSKSWLDHVDNASVALKAAEAAIAAAATQGSPSTPTEEPRAAQLVRYKGALGENAHEFGLSTSTERFTKIVSGHAVKARPLCPASVYMESAIMGCELIGTSGRDKTISFTNISFQRPLGINDKLDVKLHLSKTAKFGDEHWHYSMQSSASAVYSEGDFTMTAGPHQDMELYALLASDGMVALRNDPDAEKLRKRTAYSLFSRVVEYSDLMQGISDITFGKKAALATIQVPNHPWGSQESSVSGFYDAISLDTFIQVVGLLINCSSGTATGDEVYIASSIGNLVVSPTDFQQAQTWTVYATYSTIDSKTLSGAIFVFNEAGELVSFGSKIHFHKTSMTKLLRVLDAANPSGAKAAAAPAPRAAFAAPVAAPVAAAPVAAAAAPVAAAGPSKIPELRALISAYTGVKEADIPDDVAFASLGLDSLSAMELAGELESSLGIKVSSDDVTTSTVASLAKQLPSGGAAPAPVAAAPAPVATPAPVAAPVAAAPVAAAPAGPSRVGELRALISAFTGIKEDDIADDVSFGSLGLDSLSAMELASEMESTLGLVISSDDVTSASVSSLSAMLGGGAADVSAPKSVISSTVASTTPASDFDNQTPDVITPASECGPELHEVGSALGIPWKRASPHYSTRFRMETVVYKEIDGTEIPADIYLPAEVPSNPMPIALMIHGGGHLTLSRRAVRPPQTSYLLANGILPVSIDYRLAPHVNVVDGSMADTRDACVWLQKELPELMAAKGIIVDPSKYVVIGFSTGGTLALTTAWTTAEANVAPPRAILSFYCPVEYDPDHPVLMGQGTRPRTMTLAQIRETLPNTVAVSHSFNALDTTKLGWLQPSDPRSELTLALIKEENGMSLLFNGLPEKGEQLPRADPARCAYFSPLTQVRAGNYNNIPTFMIFGEEDEVAPFRKGVEFGQALKEAGIRGGFHAVKGGKHIFDLALTPGSQGWAEHIAPGYDFIFTELENATRGQYILPS</sequence>
<gene>
    <name evidence="8" type="primary">stbA</name>
</gene>
<name>STBA_STABI</name>
<protein>
    <recommendedName>
        <fullName evidence="8">Non-reducing polyketide synthase stbA</fullName>
        <ecNumber evidence="7">2.3.1.-</ecNumber>
    </recommendedName>
    <alternativeName>
        <fullName evidence="8">Ilicicolin B biosynthesis cluster protein stbA</fullName>
    </alternativeName>
    <alternativeName>
        <fullName evidence="8">LL-Z1272-beta biosynthesis cluster protein stbA</fullName>
    </alternativeName>
</protein>
<reference key="1">
    <citation type="journal article" date="2016" name="ChemBioChem">
        <title>Biosynthesis of LL-Z1272beta: discovery of a new member of NRPS-like enzymes for aryl-aldehyde formation.</title>
        <authorList>
            <person name="Li C."/>
            <person name="Matsuda Y."/>
            <person name="Gao H."/>
            <person name="Hu D."/>
            <person name="Yao X.S."/>
            <person name="Abe I."/>
        </authorList>
    </citation>
    <scope>NUCLEOTIDE SEQUENCE [GENOMIC DNA]</scope>
    <scope>DOMAIN</scope>
    <scope>FUNCTION</scope>
    <scope>CATALYTIC ACTIVITY</scope>
    <scope>PATHWAY</scope>
    <source>
        <strain>PYH05-7</strain>
    </source>
</reference>
<evidence type="ECO:0000250" key="1">
    <source>
        <dbReference type="UniProtKB" id="Q5ATJ7"/>
    </source>
</evidence>
<evidence type="ECO:0000255" key="2"/>
<evidence type="ECO:0000255" key="3">
    <source>
        <dbReference type="PROSITE-ProRule" id="PRU00258"/>
    </source>
</evidence>
<evidence type="ECO:0000255" key="4">
    <source>
        <dbReference type="PROSITE-ProRule" id="PRU01348"/>
    </source>
</evidence>
<evidence type="ECO:0000255" key="5">
    <source>
        <dbReference type="PROSITE-ProRule" id="PRU01363"/>
    </source>
</evidence>
<evidence type="ECO:0000255" key="6">
    <source>
        <dbReference type="PROSITE-ProRule" id="PRU10022"/>
    </source>
</evidence>
<evidence type="ECO:0000269" key="7">
    <source>
    </source>
</evidence>
<evidence type="ECO:0000303" key="8">
    <source>
    </source>
</evidence>
<evidence type="ECO:0000305" key="9">
    <source>
    </source>
</evidence>
<organism>
    <name type="scientific">Stachybotrys bisbyi</name>
    <name type="common">Hyalostachybotrys bisbyi</name>
    <dbReference type="NCBI Taxonomy" id="80385"/>
    <lineage>
        <taxon>Eukaryota</taxon>
        <taxon>Fungi</taxon>
        <taxon>Dikarya</taxon>
        <taxon>Ascomycota</taxon>
        <taxon>Pezizomycotina</taxon>
        <taxon>Sordariomycetes</taxon>
        <taxon>Hypocreomycetidae</taxon>
        <taxon>Hypocreales</taxon>
        <taxon>Stachybotryaceae</taxon>
        <taxon>Stachybotrys</taxon>
    </lineage>
</organism>
<dbReference type="EC" id="2.3.1.-" evidence="7"/>
<dbReference type="EMBL" id="LC125467">
    <property type="protein sequence ID" value="BAV19379.1"/>
    <property type="molecule type" value="Genomic_DNA"/>
</dbReference>
<dbReference type="SMR" id="A0A193PS74"/>
<dbReference type="ESTHER" id="stabi-stba">
    <property type="family name" value="BD-FAE"/>
</dbReference>
<dbReference type="UniPathway" id="UPA00213"/>
<dbReference type="GO" id="GO:0004315">
    <property type="term" value="F:3-oxoacyl-[acyl-carrier-protein] synthase activity"/>
    <property type="evidence" value="ECO:0007669"/>
    <property type="project" value="InterPro"/>
</dbReference>
<dbReference type="GO" id="GO:0004312">
    <property type="term" value="F:fatty acid synthase activity"/>
    <property type="evidence" value="ECO:0007669"/>
    <property type="project" value="TreeGrafter"/>
</dbReference>
<dbReference type="GO" id="GO:0031177">
    <property type="term" value="F:phosphopantetheine binding"/>
    <property type="evidence" value="ECO:0007669"/>
    <property type="project" value="InterPro"/>
</dbReference>
<dbReference type="GO" id="GO:0006633">
    <property type="term" value="P:fatty acid biosynthetic process"/>
    <property type="evidence" value="ECO:0007669"/>
    <property type="project" value="InterPro"/>
</dbReference>
<dbReference type="GO" id="GO:0046189">
    <property type="term" value="P:phenol-containing compound biosynthetic process"/>
    <property type="evidence" value="ECO:0007669"/>
    <property type="project" value="UniProtKB-ARBA"/>
</dbReference>
<dbReference type="GO" id="GO:0030639">
    <property type="term" value="P:polyketide biosynthetic process"/>
    <property type="evidence" value="ECO:0007669"/>
    <property type="project" value="UniProtKB-ARBA"/>
</dbReference>
<dbReference type="GO" id="GO:0016114">
    <property type="term" value="P:terpenoid biosynthetic process"/>
    <property type="evidence" value="ECO:0007669"/>
    <property type="project" value="UniProtKB-UniPathway"/>
</dbReference>
<dbReference type="GO" id="GO:0009403">
    <property type="term" value="P:toxin biosynthetic process"/>
    <property type="evidence" value="ECO:0007669"/>
    <property type="project" value="UniProtKB-ARBA"/>
</dbReference>
<dbReference type="CDD" id="cd00833">
    <property type="entry name" value="PKS"/>
    <property type="match status" value="1"/>
</dbReference>
<dbReference type="Gene3D" id="3.30.70.3290">
    <property type="match status" value="1"/>
</dbReference>
<dbReference type="Gene3D" id="3.40.47.10">
    <property type="match status" value="1"/>
</dbReference>
<dbReference type="Gene3D" id="1.10.1200.10">
    <property type="entry name" value="ACP-like"/>
    <property type="match status" value="2"/>
</dbReference>
<dbReference type="Gene3D" id="3.40.50.1820">
    <property type="entry name" value="alpha/beta hydrolase"/>
    <property type="match status" value="1"/>
</dbReference>
<dbReference type="Gene3D" id="3.40.366.10">
    <property type="entry name" value="Malonyl-Coenzyme A Acyl Carrier Protein, domain 2"/>
    <property type="match status" value="2"/>
</dbReference>
<dbReference type="Gene3D" id="3.10.129.110">
    <property type="entry name" value="Polyketide synthase dehydratase"/>
    <property type="match status" value="1"/>
</dbReference>
<dbReference type="InterPro" id="IPR029058">
    <property type="entry name" value="AB_hydrolase_fold"/>
</dbReference>
<dbReference type="InterPro" id="IPR001227">
    <property type="entry name" value="Ac_transferase_dom_sf"/>
</dbReference>
<dbReference type="InterPro" id="IPR036736">
    <property type="entry name" value="ACP-like_sf"/>
</dbReference>
<dbReference type="InterPro" id="IPR014043">
    <property type="entry name" value="Acyl_transferase_dom"/>
</dbReference>
<dbReference type="InterPro" id="IPR016035">
    <property type="entry name" value="Acyl_Trfase/lysoPLipase"/>
</dbReference>
<dbReference type="InterPro" id="IPR049492">
    <property type="entry name" value="BD-FAE-like_dom"/>
</dbReference>
<dbReference type="InterPro" id="IPR018201">
    <property type="entry name" value="Ketoacyl_synth_AS"/>
</dbReference>
<dbReference type="InterPro" id="IPR014031">
    <property type="entry name" value="Ketoacyl_synth_C"/>
</dbReference>
<dbReference type="InterPro" id="IPR014030">
    <property type="entry name" value="Ketoacyl_synth_N"/>
</dbReference>
<dbReference type="InterPro" id="IPR016036">
    <property type="entry name" value="Malonyl_transacylase_ACP-bd"/>
</dbReference>
<dbReference type="InterPro" id="IPR020841">
    <property type="entry name" value="PKS_Beta-ketoAc_synthase_dom"/>
</dbReference>
<dbReference type="InterPro" id="IPR042104">
    <property type="entry name" value="PKS_dehydratase_sf"/>
</dbReference>
<dbReference type="InterPro" id="IPR049551">
    <property type="entry name" value="PKS_DH_C"/>
</dbReference>
<dbReference type="InterPro" id="IPR049900">
    <property type="entry name" value="PKS_mFAS_DH"/>
</dbReference>
<dbReference type="InterPro" id="IPR050091">
    <property type="entry name" value="PKS_NRPS_Biosynth_Enz"/>
</dbReference>
<dbReference type="InterPro" id="IPR020806">
    <property type="entry name" value="PKS_PP-bd"/>
</dbReference>
<dbReference type="InterPro" id="IPR009081">
    <property type="entry name" value="PP-bd_ACP"/>
</dbReference>
<dbReference type="InterPro" id="IPR006162">
    <property type="entry name" value="Ppantetheine_attach_site"/>
</dbReference>
<dbReference type="InterPro" id="IPR032088">
    <property type="entry name" value="SAT"/>
</dbReference>
<dbReference type="InterPro" id="IPR016039">
    <property type="entry name" value="Thiolase-like"/>
</dbReference>
<dbReference type="PANTHER" id="PTHR43775">
    <property type="entry name" value="FATTY ACID SYNTHASE"/>
    <property type="match status" value="1"/>
</dbReference>
<dbReference type="PANTHER" id="PTHR43775:SF21">
    <property type="entry name" value="NON-REDUCING POLYKETIDE SYNTHASE AUSA-RELATED"/>
    <property type="match status" value="1"/>
</dbReference>
<dbReference type="Pfam" id="PF00698">
    <property type="entry name" value="Acyl_transf_1"/>
    <property type="match status" value="1"/>
</dbReference>
<dbReference type="Pfam" id="PF20434">
    <property type="entry name" value="BD-FAE"/>
    <property type="match status" value="1"/>
</dbReference>
<dbReference type="Pfam" id="PF22621">
    <property type="entry name" value="CurL-like_PKS_C"/>
    <property type="match status" value="1"/>
</dbReference>
<dbReference type="Pfam" id="PF00109">
    <property type="entry name" value="ketoacyl-synt"/>
    <property type="match status" value="1"/>
</dbReference>
<dbReference type="Pfam" id="PF02801">
    <property type="entry name" value="Ketoacyl-synt_C"/>
    <property type="match status" value="1"/>
</dbReference>
<dbReference type="Pfam" id="PF00550">
    <property type="entry name" value="PP-binding"/>
    <property type="match status" value="2"/>
</dbReference>
<dbReference type="Pfam" id="PF14765">
    <property type="entry name" value="PS-DH"/>
    <property type="match status" value="1"/>
</dbReference>
<dbReference type="Pfam" id="PF16073">
    <property type="entry name" value="SAT"/>
    <property type="match status" value="1"/>
</dbReference>
<dbReference type="SMART" id="SM00827">
    <property type="entry name" value="PKS_AT"/>
    <property type="match status" value="1"/>
</dbReference>
<dbReference type="SMART" id="SM00825">
    <property type="entry name" value="PKS_KS"/>
    <property type="match status" value="1"/>
</dbReference>
<dbReference type="SMART" id="SM00823">
    <property type="entry name" value="PKS_PP"/>
    <property type="match status" value="2"/>
</dbReference>
<dbReference type="SUPFAM" id="SSF47336">
    <property type="entry name" value="ACP-like"/>
    <property type="match status" value="2"/>
</dbReference>
<dbReference type="SUPFAM" id="SSF53474">
    <property type="entry name" value="alpha/beta-Hydrolases"/>
    <property type="match status" value="1"/>
</dbReference>
<dbReference type="SUPFAM" id="SSF52151">
    <property type="entry name" value="FabD/lysophospholipase-like"/>
    <property type="match status" value="1"/>
</dbReference>
<dbReference type="SUPFAM" id="SSF55048">
    <property type="entry name" value="Probable ACP-binding domain of malonyl-CoA ACP transacylase"/>
    <property type="match status" value="1"/>
</dbReference>
<dbReference type="SUPFAM" id="SSF53901">
    <property type="entry name" value="Thiolase-like"/>
    <property type="match status" value="1"/>
</dbReference>
<dbReference type="PROSITE" id="PS50075">
    <property type="entry name" value="CARRIER"/>
    <property type="match status" value="2"/>
</dbReference>
<dbReference type="PROSITE" id="PS00606">
    <property type="entry name" value="KS3_1"/>
    <property type="match status" value="1"/>
</dbReference>
<dbReference type="PROSITE" id="PS52004">
    <property type="entry name" value="KS3_2"/>
    <property type="match status" value="1"/>
</dbReference>
<dbReference type="PROSITE" id="PS00012">
    <property type="entry name" value="PHOSPHOPANTETHEINE"/>
    <property type="match status" value="2"/>
</dbReference>
<dbReference type="PROSITE" id="PS52019">
    <property type="entry name" value="PKS_MFAS_DH"/>
    <property type="match status" value="1"/>
</dbReference>